<accession>Q0G838</accession>
<accession>G5EDH6</accession>
<accession>G5EF67</accession>
<accession>Q1KYM3</accession>
<accession>Q1KYP5</accession>
<accession>Q20474</accession>
<proteinExistence type="evidence at protein level"/>
<feature type="chain" id="PRO_0000436569" description="Intraflagellar transport protein 46 homolog" evidence="6">
    <location>
        <begin position="1"/>
        <end position="471"/>
    </location>
</feature>
<feature type="region of interest" description="Disordered" evidence="2">
    <location>
        <begin position="1"/>
        <end position="202"/>
    </location>
</feature>
<feature type="region of interest" description="Disordered" evidence="2">
    <location>
        <begin position="226"/>
        <end position="246"/>
    </location>
</feature>
<feature type="compositionally biased region" description="Acidic residues" evidence="2">
    <location>
        <begin position="89"/>
        <end position="99"/>
    </location>
</feature>
<feature type="compositionally biased region" description="Acidic residues" evidence="2">
    <location>
        <begin position="231"/>
        <end position="246"/>
    </location>
</feature>
<feature type="splice variant" id="VSP_058390" description="In isoform b and isoform d." evidence="6">
    <location>
        <begin position="1"/>
        <end position="151"/>
    </location>
</feature>
<feature type="splice variant" id="VSP_058391" description="In isoform c." evidence="6">
    <original>ALENPMAANGEF</original>
    <variation>VTLFIEAFINQK</variation>
    <location>
        <begin position="147"/>
        <end position="158"/>
    </location>
</feature>
<feature type="splice variant" id="VSP_058392" description="In isoform c." evidence="6">
    <location>
        <begin position="159"/>
        <end position="471"/>
    </location>
</feature>
<feature type="splice variant" id="VSP_058393" description="In isoform d." evidence="6">
    <location>
        <begin position="202"/>
        <end position="223"/>
    </location>
</feature>
<feature type="sequence conflict" description="In Ref. 1; ABC88649." evidence="6" ref="1">
    <original>M</original>
    <variation>MLTM</variation>
    <location>
        <position position="1"/>
    </location>
</feature>
<dbReference type="EMBL" id="DQ360812">
    <property type="protein sequence ID" value="ABC88649.1"/>
    <property type="status" value="ALT_INIT"/>
    <property type="molecule type" value="mRNA"/>
</dbReference>
<dbReference type="EMBL" id="DQ360813">
    <property type="protein sequence ID" value="ABC88650.1"/>
    <property type="molecule type" value="mRNA"/>
</dbReference>
<dbReference type="EMBL" id="DQ365983">
    <property type="protein sequence ID" value="ABD14368.1"/>
    <property type="molecule type" value="mRNA"/>
</dbReference>
<dbReference type="EMBL" id="DQ365984">
    <property type="protein sequence ID" value="ABD14369.1"/>
    <property type="status" value="ALT_INIT"/>
    <property type="molecule type" value="mRNA"/>
</dbReference>
<dbReference type="EMBL" id="BX284606">
    <property type="protein sequence ID" value="CAA90337.1"/>
    <property type="molecule type" value="Genomic_DNA"/>
</dbReference>
<dbReference type="EMBL" id="BX284606">
    <property type="protein sequence ID" value="CAL36517.1"/>
    <property type="molecule type" value="Genomic_DNA"/>
</dbReference>
<dbReference type="EMBL" id="BX284606">
    <property type="protein sequence ID" value="CAL36518.1"/>
    <property type="molecule type" value="Genomic_DNA"/>
</dbReference>
<dbReference type="EMBL" id="BX284606">
    <property type="protein sequence ID" value="CAL36519.1"/>
    <property type="molecule type" value="Genomic_DNA"/>
</dbReference>
<dbReference type="PIR" id="T22317">
    <property type="entry name" value="T22317"/>
</dbReference>
<dbReference type="RefSeq" id="NP_001076767.1">
    <molecule id="Q0G838-1"/>
    <property type="nucleotide sequence ID" value="NM_001083298.2"/>
</dbReference>
<dbReference type="RefSeq" id="NP_001076768.1">
    <molecule id="Q0G838-3"/>
    <property type="nucleotide sequence ID" value="NM_001083299.3"/>
</dbReference>
<dbReference type="RefSeq" id="NP_001076769.1">
    <property type="nucleotide sequence ID" value="NM_001083300.2"/>
</dbReference>
<dbReference type="RefSeq" id="NP_001076770.1">
    <molecule id="Q0G838-4"/>
    <property type="nucleotide sequence ID" value="NM_001083301.4"/>
</dbReference>
<dbReference type="RefSeq" id="NP_001379460.1">
    <molecule id="Q0G838-2"/>
    <property type="nucleotide sequence ID" value="NM_001392834.1"/>
</dbReference>
<dbReference type="SMR" id="Q0G838"/>
<dbReference type="ComplexPortal" id="CPX-1290">
    <property type="entry name" value="Intraflagellar transport complex B"/>
</dbReference>
<dbReference type="FunCoup" id="Q0G838">
    <property type="interactions" value="13"/>
</dbReference>
<dbReference type="STRING" id="6239.F46F6.4a.1"/>
<dbReference type="PaxDb" id="6239-F46F6.4a"/>
<dbReference type="EnsemblMetazoa" id="F46F6.4a.1">
    <molecule id="Q0G838-1"/>
    <property type="protein sequence ID" value="F46F6.4a.1"/>
    <property type="gene ID" value="WBGene00001122"/>
</dbReference>
<dbReference type="EnsemblMetazoa" id="F46F6.4b.1">
    <molecule id="Q0G838-3"/>
    <property type="protein sequence ID" value="F46F6.4b.1"/>
    <property type="gene ID" value="WBGene00001122"/>
</dbReference>
<dbReference type="EnsemblMetazoa" id="F46F6.4c.1">
    <molecule id="Q0G838-2"/>
    <property type="protein sequence ID" value="F46F6.4c.1"/>
    <property type="gene ID" value="WBGene00001122"/>
</dbReference>
<dbReference type="EnsemblMetazoa" id="F46F6.4c.2">
    <molecule id="Q0G838-2"/>
    <property type="protein sequence ID" value="F46F6.4c.2"/>
    <property type="gene ID" value="WBGene00001122"/>
</dbReference>
<dbReference type="EnsemblMetazoa" id="F46F6.4d.1">
    <molecule id="Q0G838-4"/>
    <property type="protein sequence ID" value="F46F6.4d.1"/>
    <property type="gene ID" value="WBGene00001122"/>
</dbReference>
<dbReference type="GeneID" id="3565899"/>
<dbReference type="KEGG" id="cel:CELE_F46F6.4"/>
<dbReference type="UCSC" id="F46F6.4d">
    <property type="organism name" value="c. elegans"/>
</dbReference>
<dbReference type="AGR" id="WB:WBGene00001122"/>
<dbReference type="CTD" id="3565899"/>
<dbReference type="WormBase" id="F46F6.4a">
    <molecule id="Q0G838-1"/>
    <property type="protein sequence ID" value="CE40388"/>
    <property type="gene ID" value="WBGene00001122"/>
    <property type="gene designation" value="dyf-6"/>
</dbReference>
<dbReference type="WormBase" id="F46F6.4b">
    <molecule id="Q0G838-3"/>
    <property type="protein sequence ID" value="CE02236"/>
    <property type="gene ID" value="WBGene00001122"/>
    <property type="gene designation" value="dyf-6"/>
</dbReference>
<dbReference type="WormBase" id="F46F6.4c">
    <molecule id="Q0G838-2"/>
    <property type="protein sequence ID" value="CE40389"/>
    <property type="gene ID" value="WBGene00001122"/>
    <property type="gene designation" value="dyf-6"/>
</dbReference>
<dbReference type="WormBase" id="F46F6.4d">
    <molecule id="Q0G838-4"/>
    <property type="protein sequence ID" value="CE40390"/>
    <property type="gene ID" value="WBGene00001122"/>
    <property type="gene designation" value="dyf-6"/>
</dbReference>
<dbReference type="eggNOG" id="ENOG502QPNA">
    <property type="taxonomic scope" value="Eukaryota"/>
</dbReference>
<dbReference type="GeneTree" id="ENSGT00390000005544"/>
<dbReference type="InParanoid" id="Q0G838"/>
<dbReference type="OMA" id="TQIDEPP"/>
<dbReference type="OrthoDB" id="2119217at2759"/>
<dbReference type="Reactome" id="R-CEL-5620924">
    <property type="pathway name" value="Intraflagellar transport"/>
</dbReference>
<dbReference type="PRO" id="PR:Q0G838"/>
<dbReference type="Proteomes" id="UP000001940">
    <property type="component" value="Chromosome X"/>
</dbReference>
<dbReference type="Bgee" id="WBGene00001122">
    <property type="expression patterns" value="Expressed in pharyngeal muscle cell (C elegans) and 3 other cell types or tissues"/>
</dbReference>
<dbReference type="GO" id="GO:0005929">
    <property type="term" value="C:cilium"/>
    <property type="evidence" value="ECO:0000303"/>
    <property type="project" value="ComplexPortal"/>
</dbReference>
<dbReference type="GO" id="GO:0005737">
    <property type="term" value="C:cytoplasm"/>
    <property type="evidence" value="ECO:0007669"/>
    <property type="project" value="UniProtKB-KW"/>
</dbReference>
<dbReference type="GO" id="GO:0030425">
    <property type="term" value="C:dendrite"/>
    <property type="evidence" value="ECO:0000314"/>
    <property type="project" value="WormBase"/>
</dbReference>
<dbReference type="GO" id="GO:0030992">
    <property type="term" value="C:intraciliary transport particle B"/>
    <property type="evidence" value="ECO:0000318"/>
    <property type="project" value="GO_Central"/>
</dbReference>
<dbReference type="GO" id="GO:0005815">
    <property type="term" value="C:microtubule organizing center"/>
    <property type="evidence" value="ECO:0000318"/>
    <property type="project" value="GO_Central"/>
</dbReference>
<dbReference type="GO" id="GO:0031514">
    <property type="term" value="C:motile cilium"/>
    <property type="evidence" value="ECO:0000318"/>
    <property type="project" value="GO_Central"/>
</dbReference>
<dbReference type="GO" id="GO:0043025">
    <property type="term" value="C:neuronal cell body"/>
    <property type="evidence" value="ECO:0000314"/>
    <property type="project" value="WormBase"/>
</dbReference>
<dbReference type="GO" id="GO:0043204">
    <property type="term" value="C:perikaryon"/>
    <property type="evidence" value="ECO:0007669"/>
    <property type="project" value="UniProtKB-SubCell"/>
</dbReference>
<dbReference type="GO" id="GO:0060271">
    <property type="term" value="P:cilium assembly"/>
    <property type="evidence" value="ECO:0000318"/>
    <property type="project" value="GO_Central"/>
</dbReference>
<dbReference type="GO" id="GO:0042073">
    <property type="term" value="P:intraciliary transport"/>
    <property type="evidence" value="ECO:0000314"/>
    <property type="project" value="WormBase"/>
</dbReference>
<dbReference type="GO" id="GO:1905515">
    <property type="term" value="P:non-motile cilium assembly"/>
    <property type="evidence" value="ECO:0000315"/>
    <property type="project" value="WormBase"/>
</dbReference>
<dbReference type="InterPro" id="IPR022088">
    <property type="entry name" value="Intraflagellar_transp_cmplxB"/>
</dbReference>
<dbReference type="PANTHER" id="PTHR13376">
    <property type="entry name" value="INTRAFLAGELLAR TRANSPORT PROTEIN 46 HOMOLOG"/>
    <property type="match status" value="1"/>
</dbReference>
<dbReference type="PANTHER" id="PTHR13376:SF0">
    <property type="entry name" value="INTRAFLAGELLAR TRANSPORT PROTEIN 46 HOMOLOG"/>
    <property type="match status" value="1"/>
</dbReference>
<dbReference type="Pfam" id="PF12317">
    <property type="entry name" value="IFT46_B_C"/>
    <property type="match status" value="1"/>
</dbReference>
<protein>
    <recommendedName>
        <fullName evidence="1">Intraflagellar transport protein 46 homolog</fullName>
    </recommendedName>
    <alternativeName>
        <fullName evidence="9">Abnormal dye filling protein 6</fullName>
    </alternativeName>
</protein>
<comment type="function">
    <text evidence="3 4 5">Component of the intraflagellar transport (IFT) complex B required for transport of proteins in the motile cilium (PubMed:28479320). May be required for ciliary entrance and transport of specific ciliary cargo proteins such as che-3 which are related to motility (PubMed:28479320). Required for normal morphology and function of ciliated amphid sensory neurons (PubMed:16648645, PubMed:7705621).</text>
</comment>
<comment type="subunit">
    <text evidence="4">Component of the IFT complex B composed of at least che-2, che-13, dyf-1, dyf-3, dyf-6, dyf-11, dyf-13, ift-20, ift-74, ift-81, ifta-2, osm-1, osm-5 and osm-6.</text>
</comment>
<comment type="subcellular location">
    <subcellularLocation>
        <location evidence="3">Cell projection</location>
        <location evidence="3">Cilium</location>
    </subcellularLocation>
    <subcellularLocation>
        <location evidence="3">Cytoplasm</location>
        <location evidence="3">Cytoskeleton</location>
        <location evidence="3">Cilium basal body</location>
    </subcellularLocation>
    <subcellularLocation>
        <location evidence="3">Cell projection</location>
        <location evidence="3">Dendrite</location>
    </subcellularLocation>
    <subcellularLocation>
        <location evidence="3">Perikaryon</location>
    </subcellularLocation>
    <text evidence="3">Highly expressed in the transition zones between the cilium basal body and the dendrites.</text>
</comment>
<comment type="alternative products">
    <event type="alternative splicing"/>
    <isoform>
        <id>Q0G838-1</id>
        <name evidence="9">a</name>
        <sequence type="displayed"/>
    </isoform>
    <isoform>
        <id>Q0G838-2</id>
        <name evidence="10">b</name>
        <name evidence="11">c</name>
        <sequence type="described" ref="VSP_058390"/>
    </isoform>
    <isoform>
        <id>Q0G838-3</id>
        <name evidence="11">c</name>
        <sequence type="described" ref="VSP_058391 VSP_058392"/>
    </isoform>
    <isoform>
        <id>Q0G838-4</id>
        <name evidence="12">d</name>
        <sequence type="described" ref="VSP_058390 VSP_058393"/>
    </isoform>
</comment>
<comment type="tissue specificity">
    <text evidence="3">Expressed in the hypodermis and sensory neurons including inner labial, PDE, amphid and phasmid neurons.</text>
</comment>
<comment type="developmental stage">
    <text evidence="3">Expressed from hatching to adulthood. Expressed in dauer larvae.</text>
</comment>
<comment type="disruption phenotype">
    <text evidence="3 5">Shorter and compacted dendritic endings of the amphid and phasmid neurons with an abnormal distribution of the intraflagellar transport protein osm-6 along these ciliated endings (PubMed:16648645). Defective chemotaxis with 78% of mutants exhibiting reduced tracking to the chemoattractant ammonium chloride (PubMed:7705621).</text>
</comment>
<comment type="similarity">
    <text evidence="6">Belongs to the IFT46 family.</text>
</comment>
<comment type="sequence caution" evidence="6">
    <conflict type="erroneous initiation">
        <sequence resource="EMBL-CDS" id="ABC88649"/>
    </conflict>
    <text>Extended N-terminus.</text>
</comment>
<comment type="sequence caution" evidence="6">
    <conflict type="erroneous initiation">
        <sequence resource="EMBL-CDS" id="ABD14369"/>
    </conflict>
    <text>Extended N-terminus.</text>
</comment>
<sequence length="471" mass="53420">MSSETTAPMIINEKSSLPVKSEPGQLGNPISDESSEDEQSQIRALEEDQGIYYNEEVVASPKNESDDDIPLRRIQLSHQTSTQQHPEDSEPQEVIDVNDIELPAGEAQPNMERRRSVRFSGRHDEEEDGRNKHFRTPSPESLRYIQALENPMAANGEFEEEFNDLADPQVQPPPMGSPPAYTSADEGPKTPPPRASAGSNMRQESMNELIMRKISDPLQNLIRRASRLEDDSSNDDDDDDDDEDDDYTEDEIAILTYIDAYKTQEVELRPQLRPFTIEYIPAMGDVDLFIKVPRPDEIDDNVGLTQIDEPPSNQSDATIVDMQIRNATKDAAILDDDVPVKLLERADENPDEIKKWISDIKEFHKSKPAQTVHYRTQLPDVETLMQEWPQKLEEVLKTTKIPSAELDVSLEKYVEICLNIVDIPVGKSRIEALHLMFSLLNEFNNSQHFRNLAQNNNLGGETGETMDRLEL</sequence>
<reference evidence="7" key="1">
    <citation type="journal article" date="2006" name="Genetics">
        <title>The molecular identities of the Caenorhabditis elegans intraflagellar transport genes dyf-6, daf-10 and osm-1.</title>
        <authorList>
            <person name="Bell L.R."/>
            <person name="Stone S."/>
            <person name="Yochem J."/>
            <person name="Shaw J.E."/>
            <person name="Herman R.K."/>
        </authorList>
    </citation>
    <scope>NUCLEOTIDE SEQUENCE [MRNA] (ISOFORMS A; B; C AND D)</scope>
    <scope>FUNCTION</scope>
    <scope>SUBCELLULAR LOCATION</scope>
    <scope>TISSUE SPECIFICITY</scope>
    <scope>DEVELOPMENTAL STAGE</scope>
</reference>
<reference evidence="8" key="2">
    <citation type="journal article" date="1998" name="Science">
        <title>Genome sequence of the nematode C. elegans: a platform for investigating biology.</title>
        <authorList>
            <consortium name="The C. elegans sequencing consortium"/>
        </authorList>
    </citation>
    <scope>NUCLEOTIDE SEQUENCE [LARGE SCALE GENOMIC DNA]</scope>
    <source>
        <strain evidence="8">Bristol N2</strain>
    </source>
</reference>
<reference evidence="6" key="3">
    <citation type="journal article" date="1995" name="Genetics">
        <title>Mutations affecting the chemosensory neurons of Caenorhabditis elegans.</title>
        <authorList>
            <person name="Starich T.A."/>
            <person name="Herman R.K."/>
            <person name="Kari C.K."/>
            <person name="Yeh W.H."/>
            <person name="Schackwitz W.S."/>
            <person name="Schuyler M.W."/>
            <person name="Collet J."/>
            <person name="Thomas J.H."/>
            <person name="Riddle D.L."/>
        </authorList>
    </citation>
    <scope>FUNCTION</scope>
    <scope>DISRUPTION PHENOTYPE</scope>
</reference>
<reference key="4">
    <citation type="journal article" date="2017" name="Curr. Biol.">
        <title>Dynein-driven retrograde intraflagellar transport is triphasic in C. elegans sensory cilia.</title>
        <authorList>
            <person name="Yi P."/>
            <person name="Li W.J."/>
            <person name="Dong M.Q."/>
            <person name="Ou G."/>
        </authorList>
    </citation>
    <scope>FUNCTION</scope>
    <scope>IDENTIFICATION IN IFT COMPLEX B</scope>
    <scope>IDENTIFICATION BY MASS SPECTROMETRY</scope>
</reference>
<organism evidence="8">
    <name type="scientific">Caenorhabditis elegans</name>
    <dbReference type="NCBI Taxonomy" id="6239"/>
    <lineage>
        <taxon>Eukaryota</taxon>
        <taxon>Metazoa</taxon>
        <taxon>Ecdysozoa</taxon>
        <taxon>Nematoda</taxon>
        <taxon>Chromadorea</taxon>
        <taxon>Rhabditida</taxon>
        <taxon>Rhabditina</taxon>
        <taxon>Rhabditomorpha</taxon>
        <taxon>Rhabditoidea</taxon>
        <taxon>Rhabditidae</taxon>
        <taxon>Peloderinae</taxon>
        <taxon>Caenorhabditis</taxon>
    </lineage>
</organism>
<name>IFT46_CAEEL</name>
<gene>
    <name evidence="9" type="primary">dyf-6</name>
    <name evidence="9" type="ORF">F46F6.4</name>
</gene>
<evidence type="ECO:0000250" key="1">
    <source>
        <dbReference type="UniProtKB" id="Q9NQC8"/>
    </source>
</evidence>
<evidence type="ECO:0000256" key="2">
    <source>
        <dbReference type="SAM" id="MobiDB-lite"/>
    </source>
</evidence>
<evidence type="ECO:0000269" key="3">
    <source>
    </source>
</evidence>
<evidence type="ECO:0000269" key="4">
    <source>
    </source>
</evidence>
<evidence type="ECO:0000269" key="5">
    <source>
    </source>
</evidence>
<evidence type="ECO:0000305" key="6"/>
<evidence type="ECO:0000312" key="7">
    <source>
        <dbReference type="EMBL" id="ABC88649.1"/>
    </source>
</evidence>
<evidence type="ECO:0000312" key="8">
    <source>
        <dbReference type="Proteomes" id="UP000001940"/>
    </source>
</evidence>
<evidence type="ECO:0000312" key="9">
    <source>
        <dbReference type="WormBase" id="F46F6.4a"/>
    </source>
</evidence>
<evidence type="ECO:0000312" key="10">
    <source>
        <dbReference type="WormBase" id="F46F6.4b"/>
    </source>
</evidence>
<evidence type="ECO:0000312" key="11">
    <source>
        <dbReference type="WormBase" id="F46F6.4c"/>
    </source>
</evidence>
<evidence type="ECO:0000312" key="12">
    <source>
        <dbReference type="WormBase" id="F46F6.4d"/>
    </source>
</evidence>
<keyword id="KW-0025">Alternative splicing</keyword>
<keyword id="KW-0966">Cell projection</keyword>
<keyword id="KW-0969">Cilium</keyword>
<keyword id="KW-0963">Cytoplasm</keyword>
<keyword id="KW-0206">Cytoskeleton</keyword>
<keyword id="KW-1185">Reference proteome</keyword>
<keyword id="KW-0813">Transport</keyword>